<dbReference type="EMBL" id="ABSV01000790">
    <property type="protein sequence ID" value="EDZ72388.1"/>
    <property type="molecule type" value="Genomic_DNA"/>
</dbReference>
<dbReference type="Proteomes" id="UP000008988">
    <property type="component" value="Unassembled WGS sequence"/>
</dbReference>
<dbReference type="GO" id="GO:0005737">
    <property type="term" value="C:cytoplasm"/>
    <property type="evidence" value="ECO:0007669"/>
    <property type="project" value="TreeGrafter"/>
</dbReference>
<dbReference type="GO" id="GO:0005634">
    <property type="term" value="C:nucleus"/>
    <property type="evidence" value="ECO:0007669"/>
    <property type="project" value="TreeGrafter"/>
</dbReference>
<dbReference type="GO" id="GO:1990904">
    <property type="term" value="C:ribonucleoprotein complex"/>
    <property type="evidence" value="ECO:0007669"/>
    <property type="project" value="TreeGrafter"/>
</dbReference>
<dbReference type="GO" id="GO:0003729">
    <property type="term" value="F:mRNA binding"/>
    <property type="evidence" value="ECO:0007669"/>
    <property type="project" value="TreeGrafter"/>
</dbReference>
<dbReference type="CDD" id="cd12409">
    <property type="entry name" value="RRM1_RRT5"/>
    <property type="match status" value="1"/>
</dbReference>
<dbReference type="CDD" id="cd12410">
    <property type="entry name" value="RRM2_RRT5"/>
    <property type="match status" value="1"/>
</dbReference>
<dbReference type="FunFam" id="3.30.70.330:FF:000964">
    <property type="entry name" value="Regulator of rDNA transcription protein 5"/>
    <property type="match status" value="1"/>
</dbReference>
<dbReference type="Gene3D" id="3.30.70.330">
    <property type="match status" value="1"/>
</dbReference>
<dbReference type="InterPro" id="IPR012677">
    <property type="entry name" value="Nucleotide-bd_a/b_plait_sf"/>
</dbReference>
<dbReference type="InterPro" id="IPR035979">
    <property type="entry name" value="RBD_domain_sf"/>
</dbReference>
<dbReference type="InterPro" id="IPR000504">
    <property type="entry name" value="RRM_dom"/>
</dbReference>
<dbReference type="InterPro" id="IPR034244">
    <property type="entry name" value="Rrt5_RRM1"/>
</dbReference>
<dbReference type="InterPro" id="IPR034247">
    <property type="entry name" value="Rrt5_RRM2"/>
</dbReference>
<dbReference type="InterPro" id="IPR050374">
    <property type="entry name" value="RRT5_SRSF_SR"/>
</dbReference>
<dbReference type="PANTHER" id="PTHR23003:SF54">
    <property type="entry name" value="REGULATOR OF RDNA TRANSCRIPTION PROTEIN 5"/>
    <property type="match status" value="1"/>
</dbReference>
<dbReference type="PANTHER" id="PTHR23003">
    <property type="entry name" value="RNA RECOGNITION MOTIF RRM DOMAIN CONTAINING PROTEIN"/>
    <property type="match status" value="1"/>
</dbReference>
<dbReference type="Pfam" id="PF00076">
    <property type="entry name" value="RRM_1"/>
    <property type="match status" value="1"/>
</dbReference>
<dbReference type="SMART" id="SM00360">
    <property type="entry name" value="RRM"/>
    <property type="match status" value="1"/>
</dbReference>
<dbReference type="SUPFAM" id="SSF54928">
    <property type="entry name" value="RNA-binding domain, RBD"/>
    <property type="match status" value="1"/>
</dbReference>
<dbReference type="PROSITE" id="PS50102">
    <property type="entry name" value="RRM"/>
    <property type="match status" value="1"/>
</dbReference>
<sequence length="289" mass="31865">MTEQVNNDTTSDTTTTITTVYISNLPFTASERDLHAFLNNYGASSVLIPTQTVRRFSKRHNSNPRKPLGIAFAQFANNTLALKAIQDLNGTVFQNQKLFLKLHVPYEADSTPDTDVKKPKEKNKVKKTPETAADTVYCHDLPDDITDSEIRELFQLYSPQEIWIYRSKVYRRKCIPFAPHQITAALVTLQSETPIGDICDSVAKTATLRGKSIIVKPAYVSKIQEIKQLVKDNLTNARDPPPAALAEPAPAPAPVEPAEQVQEGQDNAETNDVPPPPASSSDRPTVAAT</sequence>
<feature type="chain" id="PRO_0000404363" description="Regulator of rDNA transcription protein 5">
    <location>
        <begin position="1"/>
        <end position="289"/>
    </location>
</feature>
<feature type="domain" description="RRM" evidence="2">
    <location>
        <begin position="18"/>
        <end position="105"/>
    </location>
</feature>
<feature type="region of interest" description="Disordered" evidence="3">
    <location>
        <begin position="235"/>
        <end position="289"/>
    </location>
</feature>
<feature type="compositionally biased region" description="Pro residues" evidence="3">
    <location>
        <begin position="239"/>
        <end position="255"/>
    </location>
</feature>
<feature type="compositionally biased region" description="Polar residues" evidence="3">
    <location>
        <begin position="279"/>
        <end position="289"/>
    </location>
</feature>
<comment type="function">
    <text evidence="1">May be involved in the modulation of rDNA transcription.</text>
</comment>
<comment type="similarity">
    <text evidence="4">Belongs to the RRT5 family.</text>
</comment>
<organism>
    <name type="scientific">Saccharomyces cerevisiae (strain AWRI1631)</name>
    <name type="common">Baker's yeast</name>
    <dbReference type="NCBI Taxonomy" id="545124"/>
    <lineage>
        <taxon>Eukaryota</taxon>
        <taxon>Fungi</taxon>
        <taxon>Dikarya</taxon>
        <taxon>Ascomycota</taxon>
        <taxon>Saccharomycotina</taxon>
        <taxon>Saccharomycetes</taxon>
        <taxon>Saccharomycetales</taxon>
        <taxon>Saccharomycetaceae</taxon>
        <taxon>Saccharomyces</taxon>
    </lineage>
</organism>
<name>RRT5_YEAS6</name>
<gene>
    <name type="primary">RRT5</name>
    <name type="ORF">AWRI1631_60980</name>
</gene>
<accession>B5VI57</accession>
<evidence type="ECO:0000250" key="1"/>
<evidence type="ECO:0000255" key="2">
    <source>
        <dbReference type="PROSITE-ProRule" id="PRU00176"/>
    </source>
</evidence>
<evidence type="ECO:0000256" key="3">
    <source>
        <dbReference type="SAM" id="MobiDB-lite"/>
    </source>
</evidence>
<evidence type="ECO:0000305" key="4"/>
<keyword id="KW-0694">RNA-binding</keyword>
<keyword id="KW-0804">Transcription</keyword>
<keyword id="KW-0805">Transcription regulation</keyword>
<proteinExistence type="inferred from homology"/>
<protein>
    <recommendedName>
        <fullName>Regulator of rDNA transcription protein 5</fullName>
    </recommendedName>
</protein>
<reference key="1">
    <citation type="journal article" date="2008" name="FEMS Yeast Res.">
        <title>Comparative genome analysis of a Saccharomyces cerevisiae wine strain.</title>
        <authorList>
            <person name="Borneman A.R."/>
            <person name="Forgan A.H."/>
            <person name="Pretorius I.S."/>
            <person name="Chambers P.J."/>
        </authorList>
    </citation>
    <scope>NUCLEOTIDE SEQUENCE [LARGE SCALE GENOMIC DNA]</scope>
    <source>
        <strain>AWRI1631</strain>
    </source>
</reference>